<organism>
    <name type="scientific">Salmonella dublin (strain CT_02021853)</name>
    <dbReference type="NCBI Taxonomy" id="439851"/>
    <lineage>
        <taxon>Bacteria</taxon>
        <taxon>Pseudomonadati</taxon>
        <taxon>Pseudomonadota</taxon>
        <taxon>Gammaproteobacteria</taxon>
        <taxon>Enterobacterales</taxon>
        <taxon>Enterobacteriaceae</taxon>
        <taxon>Salmonella</taxon>
    </lineage>
</organism>
<proteinExistence type="inferred from homology"/>
<comment type="similarity">
    <text evidence="1">Belongs to the UPF0253 family.</text>
</comment>
<evidence type="ECO:0000255" key="1">
    <source>
        <dbReference type="HAMAP-Rule" id="MF_01064"/>
    </source>
</evidence>
<reference key="1">
    <citation type="journal article" date="2011" name="J. Bacteriol.">
        <title>Comparative genomics of 28 Salmonella enterica isolates: evidence for CRISPR-mediated adaptive sublineage evolution.</title>
        <authorList>
            <person name="Fricke W.F."/>
            <person name="Mammel M.K."/>
            <person name="McDermott P.F."/>
            <person name="Tartera C."/>
            <person name="White D.G."/>
            <person name="Leclerc J.E."/>
            <person name="Ravel J."/>
            <person name="Cebula T.A."/>
        </authorList>
    </citation>
    <scope>NUCLEOTIDE SEQUENCE [LARGE SCALE GENOMIC DNA]</scope>
    <source>
        <strain>CT_02021853</strain>
    </source>
</reference>
<feature type="chain" id="PRO_1000136542" description="UPF0253 protein YaeP">
    <location>
        <begin position="1"/>
        <end position="66"/>
    </location>
</feature>
<accession>B5FJ38</accession>
<dbReference type="EMBL" id="CP001144">
    <property type="protein sequence ID" value="ACH74364.1"/>
    <property type="molecule type" value="Genomic_DNA"/>
</dbReference>
<dbReference type="RefSeq" id="WP_001518678.1">
    <property type="nucleotide sequence ID" value="NC_011205.1"/>
</dbReference>
<dbReference type="SMR" id="B5FJ38"/>
<dbReference type="KEGG" id="sed:SeD_A0260"/>
<dbReference type="HOGENOM" id="CLU_190008_0_0_6"/>
<dbReference type="Proteomes" id="UP000008322">
    <property type="component" value="Chromosome"/>
</dbReference>
<dbReference type="HAMAP" id="MF_01064">
    <property type="entry name" value="UPF0253"/>
    <property type="match status" value="1"/>
</dbReference>
<dbReference type="InterPro" id="IPR009624">
    <property type="entry name" value="UPF0253"/>
</dbReference>
<dbReference type="NCBIfam" id="NF003436">
    <property type="entry name" value="PRK04964.1"/>
    <property type="match status" value="1"/>
</dbReference>
<dbReference type="Pfam" id="PF06786">
    <property type="entry name" value="UPF0253"/>
    <property type="match status" value="1"/>
</dbReference>
<gene>
    <name evidence="1" type="primary">yaeP</name>
    <name type="ordered locus">SeD_A0260</name>
</gene>
<sequence length="66" mass="7156">MEKYCELVRKRYAEIASGDLGYVPDALGCVLKVLNEVAADSALSESVREKAAYAAANLLVSDYVNE</sequence>
<protein>
    <recommendedName>
        <fullName evidence="1">UPF0253 protein YaeP</fullName>
    </recommendedName>
</protein>
<name>YAEP_SALDC</name>